<organism>
    <name type="scientific">Campylobacter jejuni subsp. jejuni serotype O:2 (strain ATCC 700819 / NCTC 11168)</name>
    <dbReference type="NCBI Taxonomy" id="192222"/>
    <lineage>
        <taxon>Bacteria</taxon>
        <taxon>Pseudomonadati</taxon>
        <taxon>Campylobacterota</taxon>
        <taxon>Epsilonproteobacteria</taxon>
        <taxon>Campylobacterales</taxon>
        <taxon>Campylobacteraceae</taxon>
        <taxon>Campylobacter</taxon>
    </lineage>
</organism>
<sequence length="280" mass="31586">MQEVISYIQKAVLEISNALKFPDTSYSQNQNFTGDTQLKFDVLSDEIITKTLSQCSSIKAIISEEKDEILTLNERANFIVAYDPLDGSSLMDVNFAIGSIFAIYEEKASAKNLRAALYSMYGARLELVICKDQPKLYRLNANNEFIFIKDLRMNEKGKINATGGTQKFWEEKHAKFIKSLFDEGYRLRYSGAMVSDINQILLKGGGIFSYPATQDAPNGKLRAFFEVFPLAFIIEKAGGKTTNGKNRSLLELEFDKIHATTPCFFGSEYEISKLLKAYNE</sequence>
<keyword id="KW-0119">Carbohydrate metabolism</keyword>
<keyword id="KW-0963">Cytoplasm</keyword>
<keyword id="KW-0378">Hydrolase</keyword>
<keyword id="KW-0460">Magnesium</keyword>
<keyword id="KW-0479">Metal-binding</keyword>
<keyword id="KW-1185">Reference proteome</keyword>
<evidence type="ECO:0000255" key="1">
    <source>
        <dbReference type="HAMAP-Rule" id="MF_01855"/>
    </source>
</evidence>
<gene>
    <name evidence="1" type="primary">fbp</name>
    <name type="ordered locus">Cj0840c</name>
</gene>
<protein>
    <recommendedName>
        <fullName evidence="1">Fructose-1,6-bisphosphatase class 1</fullName>
        <shortName evidence="1">FBPase class 1</shortName>
        <ecNumber evidence="1">3.1.3.11</ecNumber>
    </recommendedName>
    <alternativeName>
        <fullName evidence="1">D-fructose-1,6-bisphosphate 1-phosphohydrolase class 1</fullName>
    </alternativeName>
</protein>
<accession>Q0PA50</accession>
<proteinExistence type="inferred from homology"/>
<feature type="chain" id="PRO_0000364512" description="Fructose-1,6-bisphosphatase class 1">
    <location>
        <begin position="1"/>
        <end position="280"/>
    </location>
</feature>
<feature type="binding site" evidence="1">
    <location>
        <position position="64"/>
    </location>
    <ligand>
        <name>Mg(2+)</name>
        <dbReference type="ChEBI" id="CHEBI:18420"/>
        <label>1</label>
    </ligand>
</feature>
<feature type="binding site" evidence="1">
    <location>
        <position position="83"/>
    </location>
    <ligand>
        <name>Mg(2+)</name>
        <dbReference type="ChEBI" id="CHEBI:18420"/>
        <label>1</label>
    </ligand>
</feature>
<feature type="binding site" evidence="1">
    <location>
        <position position="83"/>
    </location>
    <ligand>
        <name>Mg(2+)</name>
        <dbReference type="ChEBI" id="CHEBI:18420"/>
        <label>2</label>
    </ligand>
</feature>
<feature type="binding site" evidence="1">
    <location>
        <position position="85"/>
    </location>
    <ligand>
        <name>Mg(2+)</name>
        <dbReference type="ChEBI" id="CHEBI:18420"/>
        <label>1</label>
    </ligand>
</feature>
<feature type="binding site" evidence="1">
    <location>
        <begin position="86"/>
        <end position="89"/>
    </location>
    <ligand>
        <name>substrate</name>
    </ligand>
</feature>
<feature type="binding site" evidence="1">
    <location>
        <position position="86"/>
    </location>
    <ligand>
        <name>Mg(2+)</name>
        <dbReference type="ChEBI" id="CHEBI:18420"/>
        <label>2</label>
    </ligand>
</feature>
<feature type="binding site" evidence="1">
    <location>
        <position position="189"/>
    </location>
    <ligand>
        <name>substrate</name>
    </ligand>
</feature>
<feature type="binding site" evidence="1">
    <location>
        <position position="220"/>
    </location>
    <ligand>
        <name>substrate</name>
    </ligand>
</feature>
<feature type="binding site" evidence="1">
    <location>
        <position position="226"/>
    </location>
    <ligand>
        <name>Mg(2+)</name>
        <dbReference type="ChEBI" id="CHEBI:18420"/>
        <label>2</label>
    </ligand>
</feature>
<dbReference type="EC" id="3.1.3.11" evidence="1"/>
<dbReference type="EMBL" id="AL111168">
    <property type="protein sequence ID" value="CAL34968.1"/>
    <property type="molecule type" value="Genomic_DNA"/>
</dbReference>
<dbReference type="PIR" id="H81356">
    <property type="entry name" value="H81356"/>
</dbReference>
<dbReference type="RefSeq" id="WP_002864856.1">
    <property type="nucleotide sequence ID" value="NZ_SZUC01000001.1"/>
</dbReference>
<dbReference type="RefSeq" id="YP_002344247.1">
    <property type="nucleotide sequence ID" value="NC_002163.1"/>
</dbReference>
<dbReference type="SMR" id="Q0PA50"/>
<dbReference type="IntAct" id="Q0PA50">
    <property type="interactions" value="15"/>
</dbReference>
<dbReference type="STRING" id="192222.Cj0840c"/>
<dbReference type="PaxDb" id="192222-Cj0840c"/>
<dbReference type="EnsemblBacteria" id="CAL34968">
    <property type="protein sequence ID" value="CAL34968"/>
    <property type="gene ID" value="Cj0840c"/>
</dbReference>
<dbReference type="GeneID" id="905148"/>
<dbReference type="KEGG" id="cje:Cj0840c"/>
<dbReference type="PATRIC" id="fig|192222.6.peg.828"/>
<dbReference type="eggNOG" id="COG0158">
    <property type="taxonomic scope" value="Bacteria"/>
</dbReference>
<dbReference type="HOGENOM" id="CLU_039977_0_0_7"/>
<dbReference type="OrthoDB" id="9806756at2"/>
<dbReference type="UniPathway" id="UPA00138"/>
<dbReference type="Proteomes" id="UP000000799">
    <property type="component" value="Chromosome"/>
</dbReference>
<dbReference type="GO" id="GO:0005829">
    <property type="term" value="C:cytosol"/>
    <property type="evidence" value="ECO:0007669"/>
    <property type="project" value="TreeGrafter"/>
</dbReference>
<dbReference type="GO" id="GO:0042132">
    <property type="term" value="F:fructose 1,6-bisphosphate 1-phosphatase activity"/>
    <property type="evidence" value="ECO:0007669"/>
    <property type="project" value="UniProtKB-UniRule"/>
</dbReference>
<dbReference type="GO" id="GO:0000287">
    <property type="term" value="F:magnesium ion binding"/>
    <property type="evidence" value="ECO:0007669"/>
    <property type="project" value="UniProtKB-UniRule"/>
</dbReference>
<dbReference type="GO" id="GO:0030388">
    <property type="term" value="P:fructose 1,6-bisphosphate metabolic process"/>
    <property type="evidence" value="ECO:0007669"/>
    <property type="project" value="TreeGrafter"/>
</dbReference>
<dbReference type="GO" id="GO:0006002">
    <property type="term" value="P:fructose 6-phosphate metabolic process"/>
    <property type="evidence" value="ECO:0007669"/>
    <property type="project" value="TreeGrafter"/>
</dbReference>
<dbReference type="GO" id="GO:0006000">
    <property type="term" value="P:fructose metabolic process"/>
    <property type="evidence" value="ECO:0007669"/>
    <property type="project" value="TreeGrafter"/>
</dbReference>
<dbReference type="GO" id="GO:0006094">
    <property type="term" value="P:gluconeogenesis"/>
    <property type="evidence" value="ECO:0007669"/>
    <property type="project" value="UniProtKB-UniRule"/>
</dbReference>
<dbReference type="GO" id="GO:0005986">
    <property type="term" value="P:sucrose biosynthetic process"/>
    <property type="evidence" value="ECO:0007669"/>
    <property type="project" value="TreeGrafter"/>
</dbReference>
<dbReference type="Gene3D" id="3.40.190.80">
    <property type="match status" value="1"/>
</dbReference>
<dbReference type="Gene3D" id="3.30.540.10">
    <property type="entry name" value="Fructose-1,6-Bisphosphatase, subunit A, domain 1"/>
    <property type="match status" value="1"/>
</dbReference>
<dbReference type="HAMAP" id="MF_01855">
    <property type="entry name" value="FBPase_class1"/>
    <property type="match status" value="1"/>
</dbReference>
<dbReference type="InterPro" id="IPR044015">
    <property type="entry name" value="FBPase_C_dom"/>
</dbReference>
<dbReference type="InterPro" id="IPR000146">
    <property type="entry name" value="FBPase_class-1"/>
</dbReference>
<dbReference type="InterPro" id="IPR033391">
    <property type="entry name" value="FBPase_N"/>
</dbReference>
<dbReference type="InterPro" id="IPR028343">
    <property type="entry name" value="FBPtase"/>
</dbReference>
<dbReference type="InterPro" id="IPR023079">
    <property type="entry name" value="SBPase"/>
</dbReference>
<dbReference type="NCBIfam" id="NF006782">
    <property type="entry name" value="PRK09293.2-3"/>
    <property type="match status" value="1"/>
</dbReference>
<dbReference type="PANTHER" id="PTHR11556">
    <property type="entry name" value="FRUCTOSE-1,6-BISPHOSPHATASE-RELATED"/>
    <property type="match status" value="1"/>
</dbReference>
<dbReference type="PANTHER" id="PTHR11556:SF35">
    <property type="entry name" value="SEDOHEPTULOSE-1,7-BISPHOSPHATASE, CHLOROPLASTIC"/>
    <property type="match status" value="1"/>
</dbReference>
<dbReference type="Pfam" id="PF00316">
    <property type="entry name" value="FBPase"/>
    <property type="match status" value="1"/>
</dbReference>
<dbReference type="Pfam" id="PF18913">
    <property type="entry name" value="FBPase_C"/>
    <property type="match status" value="1"/>
</dbReference>
<dbReference type="PIRSF" id="PIRSF500210">
    <property type="entry name" value="FBPtase"/>
    <property type="match status" value="1"/>
</dbReference>
<dbReference type="PIRSF" id="PIRSF000904">
    <property type="entry name" value="FBPtase_SBPase"/>
    <property type="match status" value="1"/>
</dbReference>
<dbReference type="PRINTS" id="PR01958">
    <property type="entry name" value="S17BPHPHTASE"/>
</dbReference>
<dbReference type="SUPFAM" id="SSF56655">
    <property type="entry name" value="Carbohydrate phosphatase"/>
    <property type="match status" value="1"/>
</dbReference>
<comment type="catalytic activity">
    <reaction evidence="1">
        <text>beta-D-fructose 1,6-bisphosphate + H2O = beta-D-fructose 6-phosphate + phosphate</text>
        <dbReference type="Rhea" id="RHEA:11064"/>
        <dbReference type="ChEBI" id="CHEBI:15377"/>
        <dbReference type="ChEBI" id="CHEBI:32966"/>
        <dbReference type="ChEBI" id="CHEBI:43474"/>
        <dbReference type="ChEBI" id="CHEBI:57634"/>
        <dbReference type="EC" id="3.1.3.11"/>
    </reaction>
</comment>
<comment type="cofactor">
    <cofactor evidence="1">
        <name>Mg(2+)</name>
        <dbReference type="ChEBI" id="CHEBI:18420"/>
    </cofactor>
    <text evidence="1">Binds 2 magnesium ions per subunit.</text>
</comment>
<comment type="pathway">
    <text evidence="1">Carbohydrate biosynthesis; gluconeogenesis.</text>
</comment>
<comment type="subunit">
    <text evidence="1">Homotetramer.</text>
</comment>
<comment type="subcellular location">
    <subcellularLocation>
        <location evidence="1">Cytoplasm</location>
    </subcellularLocation>
</comment>
<comment type="similarity">
    <text evidence="1">Belongs to the FBPase class 1 family.</text>
</comment>
<name>F16PA_CAMJE</name>
<reference key="1">
    <citation type="journal article" date="2000" name="Nature">
        <title>The genome sequence of the food-borne pathogen Campylobacter jejuni reveals hypervariable sequences.</title>
        <authorList>
            <person name="Parkhill J."/>
            <person name="Wren B.W."/>
            <person name="Mungall K.L."/>
            <person name="Ketley J.M."/>
            <person name="Churcher C.M."/>
            <person name="Basham D."/>
            <person name="Chillingworth T."/>
            <person name="Davies R.M."/>
            <person name="Feltwell T."/>
            <person name="Holroyd S."/>
            <person name="Jagels K."/>
            <person name="Karlyshev A.V."/>
            <person name="Moule S."/>
            <person name="Pallen M.J."/>
            <person name="Penn C.W."/>
            <person name="Quail M.A."/>
            <person name="Rajandream M.A."/>
            <person name="Rutherford K.M."/>
            <person name="van Vliet A.H.M."/>
            <person name="Whitehead S."/>
            <person name="Barrell B.G."/>
        </authorList>
    </citation>
    <scope>NUCLEOTIDE SEQUENCE [LARGE SCALE GENOMIC DNA]</scope>
    <source>
        <strain>ATCC 700819 / NCTC 11168</strain>
    </source>
</reference>